<feature type="chain" id="PRO_0000227274" description="Arginine biosynthesis bifunctional protein ArgJ alpha chain" evidence="1">
    <location>
        <begin position="1"/>
        <end position="193"/>
    </location>
</feature>
<feature type="chain" id="PRO_0000227275" description="Arginine biosynthesis bifunctional protein ArgJ beta chain" evidence="1">
    <location>
        <begin position="194"/>
        <end position="409"/>
    </location>
</feature>
<feature type="active site" description="Nucleophile" evidence="1">
    <location>
        <position position="194"/>
    </location>
</feature>
<feature type="binding site" evidence="1">
    <location>
        <position position="157"/>
    </location>
    <ligand>
        <name>substrate</name>
    </ligand>
</feature>
<feature type="binding site" evidence="1">
    <location>
        <position position="183"/>
    </location>
    <ligand>
        <name>substrate</name>
    </ligand>
</feature>
<feature type="binding site" evidence="1">
    <location>
        <position position="194"/>
    </location>
    <ligand>
        <name>substrate</name>
    </ligand>
</feature>
<feature type="binding site" evidence="1">
    <location>
        <position position="281"/>
    </location>
    <ligand>
        <name>substrate</name>
    </ligand>
</feature>
<feature type="binding site" evidence="1">
    <location>
        <position position="404"/>
    </location>
    <ligand>
        <name>substrate</name>
    </ligand>
</feature>
<feature type="binding site" evidence="1">
    <location>
        <position position="409"/>
    </location>
    <ligand>
        <name>substrate</name>
    </ligand>
</feature>
<feature type="site" description="Involved in the stabilization of negative charge on the oxyanion by the formation of the oxyanion hole" evidence="1">
    <location>
        <position position="121"/>
    </location>
</feature>
<feature type="site" description="Involved in the stabilization of negative charge on the oxyanion by the formation of the oxyanion hole" evidence="1">
    <location>
        <position position="122"/>
    </location>
</feature>
<feature type="site" description="Cleavage; by autolysis" evidence="1">
    <location>
        <begin position="193"/>
        <end position="194"/>
    </location>
</feature>
<gene>
    <name evidence="1" type="primary">argJ</name>
    <name type="ordered locus">ZMO0923</name>
</gene>
<dbReference type="EC" id="2.3.1.35" evidence="1"/>
<dbReference type="EC" id="2.3.1.1" evidence="1"/>
<dbReference type="EMBL" id="AE008692">
    <property type="protein sequence ID" value="AAV89547.1"/>
    <property type="molecule type" value="Genomic_DNA"/>
</dbReference>
<dbReference type="RefSeq" id="WP_011240782.1">
    <property type="nucleotide sequence ID" value="NZ_CP035711.1"/>
</dbReference>
<dbReference type="SMR" id="Q5NP13"/>
<dbReference type="STRING" id="264203.ZMO0923"/>
<dbReference type="MEROPS" id="T05.001"/>
<dbReference type="KEGG" id="zmo:ZMO0923"/>
<dbReference type="eggNOG" id="COG1364">
    <property type="taxonomic scope" value="Bacteria"/>
</dbReference>
<dbReference type="HOGENOM" id="CLU_027172_1_0_5"/>
<dbReference type="UniPathway" id="UPA00068">
    <property type="reaction ID" value="UER00106"/>
</dbReference>
<dbReference type="UniPathway" id="UPA00068">
    <property type="reaction ID" value="UER00111"/>
</dbReference>
<dbReference type="Proteomes" id="UP000001173">
    <property type="component" value="Chromosome"/>
</dbReference>
<dbReference type="GO" id="GO:0005737">
    <property type="term" value="C:cytoplasm"/>
    <property type="evidence" value="ECO:0007669"/>
    <property type="project" value="UniProtKB-SubCell"/>
</dbReference>
<dbReference type="GO" id="GO:0004358">
    <property type="term" value="F:glutamate N-acetyltransferase activity"/>
    <property type="evidence" value="ECO:0007669"/>
    <property type="project" value="UniProtKB-UniRule"/>
</dbReference>
<dbReference type="GO" id="GO:0004042">
    <property type="term" value="F:L-glutamate N-acetyltransferase activity"/>
    <property type="evidence" value="ECO:0007669"/>
    <property type="project" value="UniProtKB-UniRule"/>
</dbReference>
<dbReference type="GO" id="GO:0006526">
    <property type="term" value="P:L-arginine biosynthetic process"/>
    <property type="evidence" value="ECO:0007669"/>
    <property type="project" value="UniProtKB-UniRule"/>
</dbReference>
<dbReference type="GO" id="GO:0006592">
    <property type="term" value="P:ornithine biosynthetic process"/>
    <property type="evidence" value="ECO:0007669"/>
    <property type="project" value="TreeGrafter"/>
</dbReference>
<dbReference type="CDD" id="cd02152">
    <property type="entry name" value="OAT"/>
    <property type="match status" value="1"/>
</dbReference>
<dbReference type="FunFam" id="3.10.20.340:FF:000003">
    <property type="entry name" value="Arginine biosynthesis bifunctional protein ArgJ"/>
    <property type="match status" value="1"/>
</dbReference>
<dbReference type="Gene3D" id="3.10.20.340">
    <property type="entry name" value="ArgJ beta chain, C-terminal domain"/>
    <property type="match status" value="1"/>
</dbReference>
<dbReference type="Gene3D" id="3.60.70.12">
    <property type="entry name" value="L-amino peptidase D-ALA esterase/amidase"/>
    <property type="match status" value="1"/>
</dbReference>
<dbReference type="HAMAP" id="MF_01106">
    <property type="entry name" value="ArgJ"/>
    <property type="match status" value="1"/>
</dbReference>
<dbReference type="InterPro" id="IPR002813">
    <property type="entry name" value="Arg_biosynth_ArgJ"/>
</dbReference>
<dbReference type="InterPro" id="IPR016117">
    <property type="entry name" value="ArgJ-like_dom_sf"/>
</dbReference>
<dbReference type="InterPro" id="IPR042195">
    <property type="entry name" value="ArgJ_beta_C"/>
</dbReference>
<dbReference type="NCBIfam" id="TIGR00120">
    <property type="entry name" value="ArgJ"/>
    <property type="match status" value="1"/>
</dbReference>
<dbReference type="NCBIfam" id="NF003802">
    <property type="entry name" value="PRK05388.1"/>
    <property type="match status" value="1"/>
</dbReference>
<dbReference type="PANTHER" id="PTHR23100">
    <property type="entry name" value="ARGININE BIOSYNTHESIS BIFUNCTIONAL PROTEIN ARGJ"/>
    <property type="match status" value="1"/>
</dbReference>
<dbReference type="PANTHER" id="PTHR23100:SF0">
    <property type="entry name" value="ARGININE BIOSYNTHESIS BIFUNCTIONAL PROTEIN ARGJ, MITOCHONDRIAL"/>
    <property type="match status" value="1"/>
</dbReference>
<dbReference type="Pfam" id="PF01960">
    <property type="entry name" value="ArgJ"/>
    <property type="match status" value="1"/>
</dbReference>
<dbReference type="SUPFAM" id="SSF56266">
    <property type="entry name" value="DmpA/ArgJ-like"/>
    <property type="match status" value="1"/>
</dbReference>
<sequence length="409" mass="43132">MIANISPLAPSYTPELPAIDGITLRTVCAGYKNWQRNDLSLFLFQPNTVVAGLTTQSACPSPEVEWCRAAIKKGKARALVVNAGNSNAFTGHKGREAVAAITARVADHLKCALHEVFVSSTGVIGVPLPIKTACDGLEKAFSAEDVNWEHMANAIMTTDTFAKMSRQDITIQGKSVKMVGIIKGSGMIAPDMATMLGYIFTDAAVAPELLQKMLTKANKKSFSCITVDSDTSTSDTVLAFATAAAGNPILSSEEDKDADKLQEAVTAICLDLAQQVVRDGEGASKFISVSVNGAVSDESAHIIAMSIANSPLVKTAMAGEDANWGRVVMAVGKAGQPAERDLLSIRFGGIEVAAKGMVVPNYDEAPVAAHLKGKEIDISVDIGLGKGQAQVWTCDLTHGYISINADYRS</sequence>
<accession>Q5NP13</accession>
<evidence type="ECO:0000255" key="1">
    <source>
        <dbReference type="HAMAP-Rule" id="MF_01106"/>
    </source>
</evidence>
<comment type="function">
    <text evidence="1">Catalyzes two activities which are involved in the cyclic version of arginine biosynthesis: the synthesis of N-acetylglutamate from glutamate and acetyl-CoA as the acetyl donor, and of ornithine by transacetylation between N(2)-acetylornithine and glutamate.</text>
</comment>
<comment type="catalytic activity">
    <reaction evidence="1">
        <text>N(2)-acetyl-L-ornithine + L-glutamate = N-acetyl-L-glutamate + L-ornithine</text>
        <dbReference type="Rhea" id="RHEA:15349"/>
        <dbReference type="ChEBI" id="CHEBI:29985"/>
        <dbReference type="ChEBI" id="CHEBI:44337"/>
        <dbReference type="ChEBI" id="CHEBI:46911"/>
        <dbReference type="ChEBI" id="CHEBI:57805"/>
        <dbReference type="EC" id="2.3.1.35"/>
    </reaction>
</comment>
<comment type="catalytic activity">
    <reaction evidence="1">
        <text>L-glutamate + acetyl-CoA = N-acetyl-L-glutamate + CoA + H(+)</text>
        <dbReference type="Rhea" id="RHEA:24292"/>
        <dbReference type="ChEBI" id="CHEBI:15378"/>
        <dbReference type="ChEBI" id="CHEBI:29985"/>
        <dbReference type="ChEBI" id="CHEBI:44337"/>
        <dbReference type="ChEBI" id="CHEBI:57287"/>
        <dbReference type="ChEBI" id="CHEBI:57288"/>
        <dbReference type="EC" id="2.3.1.1"/>
    </reaction>
</comment>
<comment type="pathway">
    <text evidence="1">Amino-acid biosynthesis; L-arginine biosynthesis; L-ornithine and N-acetyl-L-glutamate from L-glutamate and N(2)-acetyl-L-ornithine (cyclic): step 1/1.</text>
</comment>
<comment type="pathway">
    <text evidence="1">Amino-acid biosynthesis; L-arginine biosynthesis; N(2)-acetyl-L-ornithine from L-glutamate: step 1/4.</text>
</comment>
<comment type="subunit">
    <text evidence="1">Heterotetramer of two alpha and two beta chains.</text>
</comment>
<comment type="subcellular location">
    <subcellularLocation>
        <location evidence="1">Cytoplasm</location>
    </subcellularLocation>
</comment>
<comment type="similarity">
    <text evidence="1">Belongs to the ArgJ family.</text>
</comment>
<keyword id="KW-0012">Acyltransferase</keyword>
<keyword id="KW-0028">Amino-acid biosynthesis</keyword>
<keyword id="KW-0055">Arginine biosynthesis</keyword>
<keyword id="KW-0068">Autocatalytic cleavage</keyword>
<keyword id="KW-0963">Cytoplasm</keyword>
<keyword id="KW-0511">Multifunctional enzyme</keyword>
<keyword id="KW-1185">Reference proteome</keyword>
<keyword id="KW-0808">Transferase</keyword>
<proteinExistence type="inferred from homology"/>
<reference key="1">
    <citation type="journal article" date="2005" name="Nat. Biotechnol.">
        <title>The genome sequence of the ethanologenic bacterium Zymomonas mobilis ZM4.</title>
        <authorList>
            <person name="Seo J.-S."/>
            <person name="Chong H."/>
            <person name="Park H.S."/>
            <person name="Yoon K.-O."/>
            <person name="Jung C."/>
            <person name="Kim J.J."/>
            <person name="Hong J.H."/>
            <person name="Kim H."/>
            <person name="Kim J.-H."/>
            <person name="Kil J.-I."/>
            <person name="Park C.J."/>
            <person name="Oh H.-M."/>
            <person name="Lee J.-S."/>
            <person name="Jin S.-J."/>
            <person name="Um H.-W."/>
            <person name="Lee H.-J."/>
            <person name="Oh S.-J."/>
            <person name="Kim J.Y."/>
            <person name="Kang H.L."/>
            <person name="Lee S.Y."/>
            <person name="Lee K.J."/>
            <person name="Kang H.S."/>
        </authorList>
    </citation>
    <scope>NUCLEOTIDE SEQUENCE [LARGE SCALE GENOMIC DNA]</scope>
    <source>
        <strain>ATCC 31821 / ZM4 / CP4</strain>
    </source>
</reference>
<protein>
    <recommendedName>
        <fullName evidence="1">Arginine biosynthesis bifunctional protein ArgJ</fullName>
    </recommendedName>
    <domain>
        <recommendedName>
            <fullName evidence="1">Glutamate N-acetyltransferase</fullName>
            <ecNumber evidence="1">2.3.1.35</ecNumber>
        </recommendedName>
        <alternativeName>
            <fullName evidence="1">Ornithine acetyltransferase</fullName>
            <shortName evidence="1">OATase</shortName>
        </alternativeName>
        <alternativeName>
            <fullName evidence="1">Ornithine transacetylase</fullName>
        </alternativeName>
    </domain>
    <domain>
        <recommendedName>
            <fullName evidence="1">Amino-acid acetyltransferase</fullName>
            <ecNumber evidence="1">2.3.1.1</ecNumber>
        </recommendedName>
        <alternativeName>
            <fullName evidence="1">N-acetylglutamate synthase</fullName>
            <shortName evidence="1">AGSase</shortName>
        </alternativeName>
    </domain>
    <component>
        <recommendedName>
            <fullName evidence="1">Arginine biosynthesis bifunctional protein ArgJ alpha chain</fullName>
        </recommendedName>
    </component>
    <component>
        <recommendedName>
            <fullName evidence="1">Arginine biosynthesis bifunctional protein ArgJ beta chain</fullName>
        </recommendedName>
    </component>
</protein>
<name>ARGJ_ZYMMO</name>
<organism>
    <name type="scientific">Zymomonas mobilis subsp. mobilis (strain ATCC 31821 / ZM4 / CP4)</name>
    <dbReference type="NCBI Taxonomy" id="264203"/>
    <lineage>
        <taxon>Bacteria</taxon>
        <taxon>Pseudomonadati</taxon>
        <taxon>Pseudomonadota</taxon>
        <taxon>Alphaproteobacteria</taxon>
        <taxon>Sphingomonadales</taxon>
        <taxon>Zymomonadaceae</taxon>
        <taxon>Zymomonas</taxon>
    </lineage>
</organism>